<evidence type="ECO:0000255" key="1">
    <source>
        <dbReference type="HAMAP-Rule" id="MF_00113"/>
    </source>
</evidence>
<organism>
    <name type="scientific">Exiguobacterium sibiricum (strain DSM 17290 / CCUG 55495 / CIP 109462 / JCM 13490 / 255-15)</name>
    <dbReference type="NCBI Taxonomy" id="262543"/>
    <lineage>
        <taxon>Bacteria</taxon>
        <taxon>Bacillati</taxon>
        <taxon>Bacillota</taxon>
        <taxon>Bacilli</taxon>
        <taxon>Bacillales</taxon>
        <taxon>Bacillales Family XII. Incertae Sedis</taxon>
        <taxon>Exiguobacterium</taxon>
    </lineage>
</organism>
<comment type="function">
    <text evidence="1">Transfers and isomerizes the ribose moiety from AdoMet to the 7-aminomethyl group of 7-deazaguanine (preQ1-tRNA) to give epoxyqueuosine (oQ-tRNA).</text>
</comment>
<comment type="catalytic activity">
    <reaction evidence="1">
        <text>7-aminomethyl-7-carbaguanosine(34) in tRNA + S-adenosyl-L-methionine = epoxyqueuosine(34) in tRNA + adenine + L-methionine + 2 H(+)</text>
        <dbReference type="Rhea" id="RHEA:32155"/>
        <dbReference type="Rhea" id="RHEA-COMP:10342"/>
        <dbReference type="Rhea" id="RHEA-COMP:18582"/>
        <dbReference type="ChEBI" id="CHEBI:15378"/>
        <dbReference type="ChEBI" id="CHEBI:16708"/>
        <dbReference type="ChEBI" id="CHEBI:57844"/>
        <dbReference type="ChEBI" id="CHEBI:59789"/>
        <dbReference type="ChEBI" id="CHEBI:82833"/>
        <dbReference type="ChEBI" id="CHEBI:194443"/>
        <dbReference type="EC" id="2.4.99.17"/>
    </reaction>
</comment>
<comment type="pathway">
    <text evidence="1">tRNA modification; tRNA-queuosine biosynthesis.</text>
</comment>
<comment type="subunit">
    <text evidence="1">Monomer.</text>
</comment>
<comment type="subcellular location">
    <subcellularLocation>
        <location evidence="1">Cytoplasm</location>
    </subcellularLocation>
</comment>
<comment type="similarity">
    <text evidence="1">Belongs to the QueA family.</text>
</comment>
<name>QUEA_EXIS2</name>
<feature type="chain" id="PRO_1000094776" description="S-adenosylmethionine:tRNA ribosyltransferase-isomerase">
    <location>
        <begin position="1"/>
        <end position="347"/>
    </location>
</feature>
<gene>
    <name evidence="1" type="primary">queA</name>
    <name type="ordered locus">Exig_2096</name>
</gene>
<dbReference type="EC" id="2.4.99.17" evidence="1"/>
<dbReference type="EMBL" id="CP001022">
    <property type="protein sequence ID" value="ACB61548.1"/>
    <property type="molecule type" value="Genomic_DNA"/>
</dbReference>
<dbReference type="RefSeq" id="WP_012370965.1">
    <property type="nucleotide sequence ID" value="NC_010556.1"/>
</dbReference>
<dbReference type="SMR" id="B1YJR0"/>
<dbReference type="STRING" id="262543.Exig_2096"/>
<dbReference type="KEGG" id="esi:Exig_2096"/>
<dbReference type="eggNOG" id="COG0809">
    <property type="taxonomic scope" value="Bacteria"/>
</dbReference>
<dbReference type="HOGENOM" id="CLU_039110_1_0_9"/>
<dbReference type="OrthoDB" id="9805933at2"/>
<dbReference type="UniPathway" id="UPA00392"/>
<dbReference type="Proteomes" id="UP000001681">
    <property type="component" value="Chromosome"/>
</dbReference>
<dbReference type="GO" id="GO:0005737">
    <property type="term" value="C:cytoplasm"/>
    <property type="evidence" value="ECO:0007669"/>
    <property type="project" value="UniProtKB-SubCell"/>
</dbReference>
<dbReference type="GO" id="GO:0051075">
    <property type="term" value="F:S-adenosylmethionine:tRNA ribosyltransferase-isomerase activity"/>
    <property type="evidence" value="ECO:0007669"/>
    <property type="project" value="UniProtKB-EC"/>
</dbReference>
<dbReference type="GO" id="GO:0008616">
    <property type="term" value="P:queuosine biosynthetic process"/>
    <property type="evidence" value="ECO:0007669"/>
    <property type="project" value="UniProtKB-UniRule"/>
</dbReference>
<dbReference type="GO" id="GO:0002099">
    <property type="term" value="P:tRNA wobble guanine modification"/>
    <property type="evidence" value="ECO:0007669"/>
    <property type="project" value="TreeGrafter"/>
</dbReference>
<dbReference type="FunFam" id="2.40.10.240:FF:000002">
    <property type="entry name" value="S-adenosylmethionine:tRNA ribosyltransferase-isomerase"/>
    <property type="match status" value="1"/>
</dbReference>
<dbReference type="FunFam" id="3.40.1780.10:FF:000001">
    <property type="entry name" value="S-adenosylmethionine:tRNA ribosyltransferase-isomerase"/>
    <property type="match status" value="1"/>
</dbReference>
<dbReference type="Gene3D" id="2.40.10.240">
    <property type="entry name" value="QueA-like"/>
    <property type="match status" value="1"/>
</dbReference>
<dbReference type="Gene3D" id="3.40.1780.10">
    <property type="entry name" value="QueA-like"/>
    <property type="match status" value="1"/>
</dbReference>
<dbReference type="HAMAP" id="MF_00113">
    <property type="entry name" value="QueA"/>
    <property type="match status" value="1"/>
</dbReference>
<dbReference type="InterPro" id="IPR003699">
    <property type="entry name" value="QueA"/>
</dbReference>
<dbReference type="InterPro" id="IPR042118">
    <property type="entry name" value="QueA_dom1"/>
</dbReference>
<dbReference type="InterPro" id="IPR042119">
    <property type="entry name" value="QueA_dom2"/>
</dbReference>
<dbReference type="InterPro" id="IPR036100">
    <property type="entry name" value="QueA_sf"/>
</dbReference>
<dbReference type="NCBIfam" id="NF001140">
    <property type="entry name" value="PRK00147.1"/>
    <property type="match status" value="1"/>
</dbReference>
<dbReference type="NCBIfam" id="TIGR00113">
    <property type="entry name" value="queA"/>
    <property type="match status" value="1"/>
</dbReference>
<dbReference type="PANTHER" id="PTHR30307">
    <property type="entry name" value="S-ADENOSYLMETHIONINE:TRNA RIBOSYLTRANSFERASE-ISOMERASE"/>
    <property type="match status" value="1"/>
</dbReference>
<dbReference type="PANTHER" id="PTHR30307:SF0">
    <property type="entry name" value="S-ADENOSYLMETHIONINE:TRNA RIBOSYLTRANSFERASE-ISOMERASE"/>
    <property type="match status" value="1"/>
</dbReference>
<dbReference type="Pfam" id="PF02547">
    <property type="entry name" value="Queuosine_synth"/>
    <property type="match status" value="1"/>
</dbReference>
<dbReference type="SUPFAM" id="SSF111337">
    <property type="entry name" value="QueA-like"/>
    <property type="match status" value="1"/>
</dbReference>
<keyword id="KW-0963">Cytoplasm</keyword>
<keyword id="KW-0671">Queuosine biosynthesis</keyword>
<keyword id="KW-1185">Reference proteome</keyword>
<keyword id="KW-0949">S-adenosyl-L-methionine</keyword>
<keyword id="KW-0808">Transferase</keyword>
<proteinExistence type="inferred from homology"/>
<accession>B1YJR0</accession>
<sequence length="347" mass="38894">MDVNLFDFHLPEEQIAQVPLLDRTSSKLMVVNRETGALRHEKFHDIVSYFNAGDTLVINDTKVLPARLFGVKEETGGKIELLLLKQTSDDVWETLAKPAKRVKPGTVLSFGDGLLRAECVEALDDGGRILKFSYTGIFYEVLDQLGTMPLPPYIHEQLEDQDRYQTVYARERGSAAAPTAGLHFTPELLQALTDKGVQLAPLTLHVGLGTFRPVSVDDVDSHKMHSEYYELPESSAKILRETRKNGGRIIAVGTTSTRTLETVIRDHGDFVEASGWTDIFIYPGQEIKGIDGLITNFHLPKSTLIMLVSALSTREHILHAYEEAVAQNYRFFSFGDAMFLTREELNR</sequence>
<reference key="1">
    <citation type="submission" date="2008-04" db="EMBL/GenBank/DDBJ databases">
        <title>Complete sequence of chromosome of Exiguobacterium sibiricum 255-15.</title>
        <authorList>
            <consortium name="US DOE Joint Genome Institute"/>
            <person name="Copeland A."/>
            <person name="Lucas S."/>
            <person name="Lapidus A."/>
            <person name="Glavina del Rio T."/>
            <person name="Dalin E."/>
            <person name="Tice H."/>
            <person name="Bruce D."/>
            <person name="Goodwin L."/>
            <person name="Pitluck S."/>
            <person name="Kiss H."/>
            <person name="Chertkov O."/>
            <person name="Monk C."/>
            <person name="Brettin T."/>
            <person name="Detter J.C."/>
            <person name="Han C."/>
            <person name="Kuske C.R."/>
            <person name="Schmutz J."/>
            <person name="Larimer F."/>
            <person name="Land M."/>
            <person name="Hauser L."/>
            <person name="Kyrpides N."/>
            <person name="Mikhailova N."/>
            <person name="Vishnivetskaya T."/>
            <person name="Rodrigues D.F."/>
            <person name="Gilichinsky D."/>
            <person name="Tiedje J."/>
            <person name="Richardson P."/>
        </authorList>
    </citation>
    <scope>NUCLEOTIDE SEQUENCE [LARGE SCALE GENOMIC DNA]</scope>
    <source>
        <strain>DSM 17290 / CCUG 55495 / CIP 109462 / JCM 13490 / 255-15</strain>
    </source>
</reference>
<protein>
    <recommendedName>
        <fullName evidence="1">S-adenosylmethionine:tRNA ribosyltransferase-isomerase</fullName>
        <ecNumber evidence="1">2.4.99.17</ecNumber>
    </recommendedName>
    <alternativeName>
        <fullName evidence="1">Queuosine biosynthesis protein QueA</fullName>
    </alternativeName>
</protein>